<proteinExistence type="inferred from homology"/>
<evidence type="ECO:0000255" key="1">
    <source>
        <dbReference type="HAMAP-Rule" id="MF_00173"/>
    </source>
</evidence>
<feature type="chain" id="PRO_1000097872" description="Arginine repressor">
    <location>
        <begin position="1"/>
        <end position="149"/>
    </location>
</feature>
<name>ARGR_EXIS2</name>
<accession>B1YLQ7</accession>
<organism>
    <name type="scientific">Exiguobacterium sibiricum (strain DSM 17290 / CCUG 55495 / CIP 109462 / JCM 13490 / 255-15)</name>
    <dbReference type="NCBI Taxonomy" id="262543"/>
    <lineage>
        <taxon>Bacteria</taxon>
        <taxon>Bacillati</taxon>
        <taxon>Bacillota</taxon>
        <taxon>Bacilli</taxon>
        <taxon>Bacillales</taxon>
        <taxon>Bacillales Family XII. Incertae Sedis</taxon>
        <taxon>Exiguobacterium</taxon>
    </lineage>
</organism>
<gene>
    <name evidence="1" type="primary">argR</name>
    <name type="ordered locus">Exig_0910</name>
</gene>
<comment type="function">
    <text evidence="1">Regulates arginine biosynthesis genes.</text>
</comment>
<comment type="pathway">
    <text>Amino-acid biosynthesis; L-arginine biosynthesis [regulation].</text>
</comment>
<comment type="subcellular location">
    <subcellularLocation>
        <location evidence="1">Cytoplasm</location>
    </subcellularLocation>
</comment>
<comment type="similarity">
    <text evidence="1">Belongs to the ArgR family.</text>
</comment>
<sequence length="149" mass="16750">MTKGQRLIKIREIITQSEIETQDELVEELRNAGYKVTQATVSRDIKELHLVKVPLNDGRYKYSLPADQRFNPLGKLRRLLGDSFISIDSAQNLIVMHVLPGNANALGVLLDHLNWPELLGTVCGDDTILMITRNEEAATEVTERILGML</sequence>
<reference key="1">
    <citation type="submission" date="2008-04" db="EMBL/GenBank/DDBJ databases">
        <title>Complete sequence of chromosome of Exiguobacterium sibiricum 255-15.</title>
        <authorList>
            <consortium name="US DOE Joint Genome Institute"/>
            <person name="Copeland A."/>
            <person name="Lucas S."/>
            <person name="Lapidus A."/>
            <person name="Glavina del Rio T."/>
            <person name="Dalin E."/>
            <person name="Tice H."/>
            <person name="Bruce D."/>
            <person name="Goodwin L."/>
            <person name="Pitluck S."/>
            <person name="Kiss H."/>
            <person name="Chertkov O."/>
            <person name="Monk C."/>
            <person name="Brettin T."/>
            <person name="Detter J.C."/>
            <person name="Han C."/>
            <person name="Kuske C.R."/>
            <person name="Schmutz J."/>
            <person name="Larimer F."/>
            <person name="Land M."/>
            <person name="Hauser L."/>
            <person name="Kyrpides N."/>
            <person name="Mikhailova N."/>
            <person name="Vishnivetskaya T."/>
            <person name="Rodrigues D.F."/>
            <person name="Gilichinsky D."/>
            <person name="Tiedje J."/>
            <person name="Richardson P."/>
        </authorList>
    </citation>
    <scope>NUCLEOTIDE SEQUENCE [LARGE SCALE GENOMIC DNA]</scope>
    <source>
        <strain>DSM 17290 / CCUG 55495 / CIP 109462 / JCM 13490 / 255-15</strain>
    </source>
</reference>
<keyword id="KW-0028">Amino-acid biosynthesis</keyword>
<keyword id="KW-0055">Arginine biosynthesis</keyword>
<keyword id="KW-0963">Cytoplasm</keyword>
<keyword id="KW-0238">DNA-binding</keyword>
<keyword id="KW-1185">Reference proteome</keyword>
<keyword id="KW-0678">Repressor</keyword>
<keyword id="KW-0804">Transcription</keyword>
<keyword id="KW-0805">Transcription regulation</keyword>
<dbReference type="EMBL" id="CP001022">
    <property type="protein sequence ID" value="ACB60390.1"/>
    <property type="molecule type" value="Genomic_DNA"/>
</dbReference>
<dbReference type="RefSeq" id="WP_012369814.1">
    <property type="nucleotide sequence ID" value="NC_010556.1"/>
</dbReference>
<dbReference type="SMR" id="B1YLQ7"/>
<dbReference type="STRING" id="262543.Exig_0910"/>
<dbReference type="KEGG" id="esi:Exig_0910"/>
<dbReference type="eggNOG" id="COG1438">
    <property type="taxonomic scope" value="Bacteria"/>
</dbReference>
<dbReference type="HOGENOM" id="CLU_097103_3_0_9"/>
<dbReference type="OrthoDB" id="9807089at2"/>
<dbReference type="UniPathway" id="UPA00068"/>
<dbReference type="Proteomes" id="UP000001681">
    <property type="component" value="Chromosome"/>
</dbReference>
<dbReference type="GO" id="GO:0005737">
    <property type="term" value="C:cytoplasm"/>
    <property type="evidence" value="ECO:0007669"/>
    <property type="project" value="UniProtKB-SubCell"/>
</dbReference>
<dbReference type="GO" id="GO:0034618">
    <property type="term" value="F:arginine binding"/>
    <property type="evidence" value="ECO:0007669"/>
    <property type="project" value="InterPro"/>
</dbReference>
<dbReference type="GO" id="GO:0003677">
    <property type="term" value="F:DNA binding"/>
    <property type="evidence" value="ECO:0007669"/>
    <property type="project" value="UniProtKB-KW"/>
</dbReference>
<dbReference type="GO" id="GO:0003700">
    <property type="term" value="F:DNA-binding transcription factor activity"/>
    <property type="evidence" value="ECO:0007669"/>
    <property type="project" value="UniProtKB-UniRule"/>
</dbReference>
<dbReference type="GO" id="GO:0006526">
    <property type="term" value="P:L-arginine biosynthetic process"/>
    <property type="evidence" value="ECO:0007669"/>
    <property type="project" value="UniProtKB-UniPathway"/>
</dbReference>
<dbReference type="GO" id="GO:0051259">
    <property type="term" value="P:protein complex oligomerization"/>
    <property type="evidence" value="ECO:0007669"/>
    <property type="project" value="InterPro"/>
</dbReference>
<dbReference type="GO" id="GO:1900079">
    <property type="term" value="P:regulation of arginine biosynthetic process"/>
    <property type="evidence" value="ECO:0007669"/>
    <property type="project" value="UniProtKB-UniRule"/>
</dbReference>
<dbReference type="Gene3D" id="3.30.1360.40">
    <property type="match status" value="1"/>
</dbReference>
<dbReference type="Gene3D" id="1.10.10.10">
    <property type="entry name" value="Winged helix-like DNA-binding domain superfamily/Winged helix DNA-binding domain"/>
    <property type="match status" value="1"/>
</dbReference>
<dbReference type="HAMAP" id="MF_00173">
    <property type="entry name" value="Arg_repressor"/>
    <property type="match status" value="1"/>
</dbReference>
<dbReference type="InterPro" id="IPR001669">
    <property type="entry name" value="Arg_repress"/>
</dbReference>
<dbReference type="InterPro" id="IPR020899">
    <property type="entry name" value="Arg_repress_C"/>
</dbReference>
<dbReference type="InterPro" id="IPR036251">
    <property type="entry name" value="Arg_repress_C_sf"/>
</dbReference>
<dbReference type="InterPro" id="IPR020900">
    <property type="entry name" value="Arg_repress_DNA-bd"/>
</dbReference>
<dbReference type="InterPro" id="IPR036388">
    <property type="entry name" value="WH-like_DNA-bd_sf"/>
</dbReference>
<dbReference type="InterPro" id="IPR036390">
    <property type="entry name" value="WH_DNA-bd_sf"/>
</dbReference>
<dbReference type="NCBIfam" id="TIGR01529">
    <property type="entry name" value="argR_whole"/>
    <property type="match status" value="1"/>
</dbReference>
<dbReference type="NCBIfam" id="NF003281">
    <property type="entry name" value="PRK04280.1"/>
    <property type="match status" value="1"/>
</dbReference>
<dbReference type="PANTHER" id="PTHR34471">
    <property type="entry name" value="ARGININE REPRESSOR"/>
    <property type="match status" value="1"/>
</dbReference>
<dbReference type="PANTHER" id="PTHR34471:SF1">
    <property type="entry name" value="ARGININE REPRESSOR"/>
    <property type="match status" value="1"/>
</dbReference>
<dbReference type="Pfam" id="PF01316">
    <property type="entry name" value="Arg_repressor"/>
    <property type="match status" value="1"/>
</dbReference>
<dbReference type="Pfam" id="PF02863">
    <property type="entry name" value="Arg_repressor_C"/>
    <property type="match status" value="1"/>
</dbReference>
<dbReference type="PRINTS" id="PR01467">
    <property type="entry name" value="ARGREPRESSOR"/>
</dbReference>
<dbReference type="SUPFAM" id="SSF55252">
    <property type="entry name" value="C-terminal domain of arginine repressor"/>
    <property type="match status" value="1"/>
</dbReference>
<dbReference type="SUPFAM" id="SSF46785">
    <property type="entry name" value="Winged helix' DNA-binding domain"/>
    <property type="match status" value="1"/>
</dbReference>
<protein>
    <recommendedName>
        <fullName evidence="1">Arginine repressor</fullName>
    </recommendedName>
</protein>